<keyword id="KW-1003">Cell membrane</keyword>
<keyword id="KW-0350">Heme biosynthesis</keyword>
<keyword id="KW-0408">Iron</keyword>
<keyword id="KW-0472">Membrane</keyword>
<keyword id="KW-0479">Metal-binding</keyword>
<keyword id="KW-0560">Oxidoreductase</keyword>
<keyword id="KW-1185">Reference proteome</keyword>
<keyword id="KW-0812">Transmembrane</keyword>
<keyword id="KW-1133">Transmembrane helix</keyword>
<organism>
    <name type="scientific">Acidiphilium cryptum (strain JF-5)</name>
    <dbReference type="NCBI Taxonomy" id="349163"/>
    <lineage>
        <taxon>Bacteria</taxon>
        <taxon>Pseudomonadati</taxon>
        <taxon>Pseudomonadota</taxon>
        <taxon>Alphaproteobacteria</taxon>
        <taxon>Acetobacterales</taxon>
        <taxon>Acidocellaceae</taxon>
        <taxon>Acidiphilium</taxon>
    </lineage>
</organism>
<proteinExistence type="inferred from homology"/>
<feature type="chain" id="PRO_0000349006" description="Heme A synthase 1">
    <location>
        <begin position="1"/>
        <end position="358"/>
    </location>
</feature>
<feature type="transmembrane region" description="Helical" evidence="1">
    <location>
        <begin position="11"/>
        <end position="31"/>
    </location>
</feature>
<feature type="transmembrane region" description="Helical" evidence="1">
    <location>
        <begin position="98"/>
        <end position="117"/>
    </location>
</feature>
<feature type="transmembrane region" description="Helical" evidence="1">
    <location>
        <begin position="123"/>
        <end position="143"/>
    </location>
</feature>
<feature type="transmembrane region" description="Helical" evidence="1">
    <location>
        <begin position="159"/>
        <end position="179"/>
    </location>
</feature>
<feature type="transmembrane region" description="Helical" evidence="1">
    <location>
        <begin position="199"/>
        <end position="219"/>
    </location>
</feature>
<feature type="transmembrane region" description="Helical" evidence="1">
    <location>
        <begin position="264"/>
        <end position="284"/>
    </location>
</feature>
<feature type="transmembrane region" description="Helical" evidence="1">
    <location>
        <begin position="292"/>
        <end position="312"/>
    </location>
</feature>
<feature type="transmembrane region" description="Helical" evidence="1">
    <location>
        <begin position="315"/>
        <end position="335"/>
    </location>
</feature>
<feature type="binding site" description="axial binding residue" evidence="1">
    <location>
        <position position="262"/>
    </location>
    <ligand>
        <name>heme</name>
        <dbReference type="ChEBI" id="CHEBI:30413"/>
    </ligand>
    <ligandPart>
        <name>Fe</name>
        <dbReference type="ChEBI" id="CHEBI:18248"/>
    </ligandPart>
</feature>
<feature type="binding site" description="axial binding residue" evidence="1">
    <location>
        <position position="322"/>
    </location>
    <ligand>
        <name>heme</name>
        <dbReference type="ChEBI" id="CHEBI:30413"/>
    </ligand>
    <ligandPart>
        <name>Fe</name>
        <dbReference type="ChEBI" id="CHEBI:18248"/>
    </ligandPart>
</feature>
<sequence>MSGAAARGDRLVGTWLLVICFMIFGMVVGGGHARTIGAGFVIQTWQPFTGIVPPLTHAAWERAFGLYKATAQYQAMQPKMTLAQFQSLYLPMFLDRDWGRLMAVVFLVPLAVFRLRGRISNRLTAWLLFLFGLGAGEATMGWYMTYEGMTSRILQPSPLYLGPHFVLAMLIFTAMLWTALTLRNPEPAILPGLARLRGLLSVSIGLIIATIGLGALVAASGALKVYNTFPLMDGHALPPHALAMHPLWLNFLANKATVQFEHRVAATVTAIVVVIAAAMGLRAPVGAKARDLFLLLAGLVSLQYILGMSTLVSGMAELGYVHELNAVLLLAACIACRHALRGATAAVPLPVYEMKAAE</sequence>
<name>CTAA1_ACICJ</name>
<comment type="function">
    <text evidence="1">Catalyzes the conversion of heme O to heme A by two successive hydroxylations of the methyl group at C8. The first hydroxylation forms heme I, the second hydroxylation results in an unstable dihydroxymethyl group, which spontaneously dehydrates, resulting in the formyl group of heme A.</text>
</comment>
<comment type="catalytic activity">
    <reaction evidence="1">
        <text>Fe(II)-heme o + 2 A + H2O = Fe(II)-heme a + 2 AH2</text>
        <dbReference type="Rhea" id="RHEA:63388"/>
        <dbReference type="ChEBI" id="CHEBI:13193"/>
        <dbReference type="ChEBI" id="CHEBI:15377"/>
        <dbReference type="ChEBI" id="CHEBI:17499"/>
        <dbReference type="ChEBI" id="CHEBI:60530"/>
        <dbReference type="ChEBI" id="CHEBI:61715"/>
        <dbReference type="EC" id="1.17.99.9"/>
    </reaction>
    <physiologicalReaction direction="left-to-right" evidence="1">
        <dbReference type="Rhea" id="RHEA:63389"/>
    </physiologicalReaction>
</comment>
<comment type="cofactor">
    <cofactor evidence="1">
        <name>heme b</name>
        <dbReference type="ChEBI" id="CHEBI:60344"/>
    </cofactor>
</comment>
<comment type="pathway">
    <text evidence="1">Porphyrin-containing compound metabolism; heme A biosynthesis; heme A from heme O: step 1/1.</text>
</comment>
<comment type="subunit">
    <text evidence="1">Interacts with CtaB.</text>
</comment>
<comment type="subcellular location">
    <subcellularLocation>
        <location evidence="1">Cell membrane</location>
        <topology evidence="1">Multi-pass membrane protein</topology>
    </subcellularLocation>
</comment>
<comment type="similarity">
    <text evidence="1">Belongs to the COX15/CtaA family. Type 2 subfamily.</text>
</comment>
<accession>A5FXV3</accession>
<evidence type="ECO:0000255" key="1">
    <source>
        <dbReference type="HAMAP-Rule" id="MF_01665"/>
    </source>
</evidence>
<dbReference type="EC" id="1.17.99.9" evidence="1"/>
<dbReference type="EMBL" id="CP000697">
    <property type="protein sequence ID" value="ABQ30435.1"/>
    <property type="molecule type" value="Genomic_DNA"/>
</dbReference>
<dbReference type="RefSeq" id="WP_011942085.1">
    <property type="nucleotide sequence ID" value="NC_009484.1"/>
</dbReference>
<dbReference type="SMR" id="A5FXV3"/>
<dbReference type="STRING" id="349163.Acry_1224"/>
<dbReference type="KEGG" id="acr:Acry_1224"/>
<dbReference type="eggNOG" id="COG1612">
    <property type="taxonomic scope" value="Bacteria"/>
</dbReference>
<dbReference type="HOGENOM" id="CLU_017627_0_0_5"/>
<dbReference type="UniPathway" id="UPA00269">
    <property type="reaction ID" value="UER00713"/>
</dbReference>
<dbReference type="Proteomes" id="UP000000245">
    <property type="component" value="Chromosome"/>
</dbReference>
<dbReference type="GO" id="GO:0005886">
    <property type="term" value="C:plasma membrane"/>
    <property type="evidence" value="ECO:0007669"/>
    <property type="project" value="UniProtKB-SubCell"/>
</dbReference>
<dbReference type="GO" id="GO:0046872">
    <property type="term" value="F:metal ion binding"/>
    <property type="evidence" value="ECO:0007669"/>
    <property type="project" value="UniProtKB-KW"/>
</dbReference>
<dbReference type="GO" id="GO:0016653">
    <property type="term" value="F:oxidoreductase activity, acting on NAD(P)H, heme protein as acceptor"/>
    <property type="evidence" value="ECO:0007669"/>
    <property type="project" value="InterPro"/>
</dbReference>
<dbReference type="GO" id="GO:0006784">
    <property type="term" value="P:heme A biosynthetic process"/>
    <property type="evidence" value="ECO:0007669"/>
    <property type="project" value="UniProtKB-UniRule"/>
</dbReference>
<dbReference type="HAMAP" id="MF_01665">
    <property type="entry name" value="HemeA_synth_type2"/>
    <property type="match status" value="1"/>
</dbReference>
<dbReference type="InterPro" id="IPR003780">
    <property type="entry name" value="COX15/CtaA_fam"/>
</dbReference>
<dbReference type="InterPro" id="IPR023754">
    <property type="entry name" value="HemeA_Synthase_type2"/>
</dbReference>
<dbReference type="PANTHER" id="PTHR23289">
    <property type="entry name" value="CYTOCHROME C OXIDASE ASSEMBLY PROTEIN COX15"/>
    <property type="match status" value="1"/>
</dbReference>
<dbReference type="PANTHER" id="PTHR23289:SF2">
    <property type="entry name" value="CYTOCHROME C OXIDASE ASSEMBLY PROTEIN COX15 HOMOLOG"/>
    <property type="match status" value="1"/>
</dbReference>
<dbReference type="Pfam" id="PF02628">
    <property type="entry name" value="COX15-CtaA"/>
    <property type="match status" value="1"/>
</dbReference>
<gene>
    <name evidence="1" type="primary">ctaA1</name>
    <name type="ordered locus">Acry_1224</name>
</gene>
<protein>
    <recommendedName>
        <fullName evidence="1">Heme A synthase 1</fullName>
        <shortName evidence="1">HAS 1</shortName>
        <ecNumber evidence="1">1.17.99.9</ecNumber>
    </recommendedName>
    <alternativeName>
        <fullName evidence="1">Cytochrome aa3-controlling protein 1</fullName>
    </alternativeName>
</protein>
<reference key="1">
    <citation type="submission" date="2007-05" db="EMBL/GenBank/DDBJ databases">
        <title>Complete sequence of chromosome of Acidiphilium cryptum JF-5.</title>
        <authorList>
            <consortium name="US DOE Joint Genome Institute"/>
            <person name="Copeland A."/>
            <person name="Lucas S."/>
            <person name="Lapidus A."/>
            <person name="Barry K."/>
            <person name="Detter J.C."/>
            <person name="Glavina del Rio T."/>
            <person name="Hammon N."/>
            <person name="Israni S."/>
            <person name="Dalin E."/>
            <person name="Tice H."/>
            <person name="Pitluck S."/>
            <person name="Sims D."/>
            <person name="Brettin T."/>
            <person name="Bruce D."/>
            <person name="Han C."/>
            <person name="Schmutz J."/>
            <person name="Larimer F."/>
            <person name="Land M."/>
            <person name="Hauser L."/>
            <person name="Kyrpides N."/>
            <person name="Kim E."/>
            <person name="Magnuson T."/>
            <person name="Richardson P."/>
        </authorList>
    </citation>
    <scope>NUCLEOTIDE SEQUENCE [LARGE SCALE GENOMIC DNA]</scope>
    <source>
        <strain>JF-5</strain>
    </source>
</reference>